<name>NADE_PARPJ</name>
<comment type="function">
    <text evidence="1">Catalyzes the ATP-dependent amidation of deamido-NAD to form NAD. Uses ammonia as a nitrogen source.</text>
</comment>
<comment type="catalytic activity">
    <reaction evidence="1">
        <text>deamido-NAD(+) + NH4(+) + ATP = AMP + diphosphate + NAD(+) + H(+)</text>
        <dbReference type="Rhea" id="RHEA:21188"/>
        <dbReference type="ChEBI" id="CHEBI:15378"/>
        <dbReference type="ChEBI" id="CHEBI:28938"/>
        <dbReference type="ChEBI" id="CHEBI:30616"/>
        <dbReference type="ChEBI" id="CHEBI:33019"/>
        <dbReference type="ChEBI" id="CHEBI:57540"/>
        <dbReference type="ChEBI" id="CHEBI:58437"/>
        <dbReference type="ChEBI" id="CHEBI:456215"/>
        <dbReference type="EC" id="6.3.1.5"/>
    </reaction>
</comment>
<comment type="pathway">
    <text evidence="1">Cofactor biosynthesis; NAD(+) biosynthesis; NAD(+) from deamido-NAD(+) (ammonia route): step 1/1.</text>
</comment>
<comment type="subunit">
    <text evidence="1">Homodimer.</text>
</comment>
<comment type="similarity">
    <text evidence="1">Belongs to the NAD synthetase family.</text>
</comment>
<protein>
    <recommendedName>
        <fullName evidence="1">NH(3)-dependent NAD(+) synthetase</fullName>
        <ecNumber evidence="1">6.3.1.5</ecNumber>
    </recommendedName>
</protein>
<organism>
    <name type="scientific">Paraburkholderia phytofirmans (strain DSM 17436 / LMG 22146 / PsJN)</name>
    <name type="common">Burkholderia phytofirmans</name>
    <dbReference type="NCBI Taxonomy" id="398527"/>
    <lineage>
        <taxon>Bacteria</taxon>
        <taxon>Pseudomonadati</taxon>
        <taxon>Pseudomonadota</taxon>
        <taxon>Betaproteobacteria</taxon>
        <taxon>Burkholderiales</taxon>
        <taxon>Burkholderiaceae</taxon>
        <taxon>Paraburkholderia</taxon>
    </lineage>
</organism>
<proteinExistence type="inferred from homology"/>
<evidence type="ECO:0000255" key="1">
    <source>
        <dbReference type="HAMAP-Rule" id="MF_00193"/>
    </source>
</evidence>
<gene>
    <name evidence="1" type="primary">nadE</name>
    <name type="ordered locus">Bphyt_4784</name>
</gene>
<dbReference type="EC" id="6.3.1.5" evidence="1"/>
<dbReference type="EMBL" id="CP001053">
    <property type="protein sequence ID" value="ACD19149.1"/>
    <property type="molecule type" value="Genomic_DNA"/>
</dbReference>
<dbReference type="RefSeq" id="WP_012426662.1">
    <property type="nucleotide sequence ID" value="NC_010676.1"/>
</dbReference>
<dbReference type="SMR" id="B2TDV9"/>
<dbReference type="STRING" id="398527.Bphyt_4784"/>
<dbReference type="KEGG" id="bpy:Bphyt_4784"/>
<dbReference type="eggNOG" id="COG0171">
    <property type="taxonomic scope" value="Bacteria"/>
</dbReference>
<dbReference type="HOGENOM" id="CLU_059327_3_0_4"/>
<dbReference type="OrthoDB" id="3266517at2"/>
<dbReference type="UniPathway" id="UPA00253">
    <property type="reaction ID" value="UER00333"/>
</dbReference>
<dbReference type="Proteomes" id="UP000001739">
    <property type="component" value="Chromosome 2"/>
</dbReference>
<dbReference type="GO" id="GO:0005737">
    <property type="term" value="C:cytoplasm"/>
    <property type="evidence" value="ECO:0007669"/>
    <property type="project" value="InterPro"/>
</dbReference>
<dbReference type="GO" id="GO:0005524">
    <property type="term" value="F:ATP binding"/>
    <property type="evidence" value="ECO:0007669"/>
    <property type="project" value="UniProtKB-UniRule"/>
</dbReference>
<dbReference type="GO" id="GO:0004359">
    <property type="term" value="F:glutaminase activity"/>
    <property type="evidence" value="ECO:0007669"/>
    <property type="project" value="InterPro"/>
</dbReference>
<dbReference type="GO" id="GO:0046872">
    <property type="term" value="F:metal ion binding"/>
    <property type="evidence" value="ECO:0007669"/>
    <property type="project" value="UniProtKB-KW"/>
</dbReference>
<dbReference type="GO" id="GO:0003952">
    <property type="term" value="F:NAD+ synthase (glutamine-hydrolyzing) activity"/>
    <property type="evidence" value="ECO:0007669"/>
    <property type="project" value="InterPro"/>
</dbReference>
<dbReference type="GO" id="GO:0008795">
    <property type="term" value="F:NAD+ synthase activity"/>
    <property type="evidence" value="ECO:0007669"/>
    <property type="project" value="UniProtKB-UniRule"/>
</dbReference>
<dbReference type="GO" id="GO:0009435">
    <property type="term" value="P:NAD biosynthetic process"/>
    <property type="evidence" value="ECO:0007669"/>
    <property type="project" value="UniProtKB-UniRule"/>
</dbReference>
<dbReference type="CDD" id="cd00553">
    <property type="entry name" value="NAD_synthase"/>
    <property type="match status" value="1"/>
</dbReference>
<dbReference type="Gene3D" id="3.40.50.620">
    <property type="entry name" value="HUPs"/>
    <property type="match status" value="1"/>
</dbReference>
<dbReference type="HAMAP" id="MF_00193">
    <property type="entry name" value="NadE_ammonia_dep"/>
    <property type="match status" value="1"/>
</dbReference>
<dbReference type="InterPro" id="IPR022310">
    <property type="entry name" value="NAD/GMP_synthase"/>
</dbReference>
<dbReference type="InterPro" id="IPR003694">
    <property type="entry name" value="NAD_synthase"/>
</dbReference>
<dbReference type="InterPro" id="IPR022926">
    <property type="entry name" value="NH(3)-dep_NAD(+)_synth"/>
</dbReference>
<dbReference type="InterPro" id="IPR014729">
    <property type="entry name" value="Rossmann-like_a/b/a_fold"/>
</dbReference>
<dbReference type="NCBIfam" id="TIGR00552">
    <property type="entry name" value="nadE"/>
    <property type="match status" value="1"/>
</dbReference>
<dbReference type="NCBIfam" id="NF001979">
    <property type="entry name" value="PRK00768.1"/>
    <property type="match status" value="1"/>
</dbReference>
<dbReference type="PANTHER" id="PTHR23090">
    <property type="entry name" value="NH 3 /GLUTAMINE-DEPENDENT NAD + SYNTHETASE"/>
    <property type="match status" value="1"/>
</dbReference>
<dbReference type="PANTHER" id="PTHR23090:SF7">
    <property type="entry name" value="NH(3)-DEPENDENT NAD(+) SYNTHETASE"/>
    <property type="match status" value="1"/>
</dbReference>
<dbReference type="Pfam" id="PF02540">
    <property type="entry name" value="NAD_synthase"/>
    <property type="match status" value="1"/>
</dbReference>
<dbReference type="SUPFAM" id="SSF52402">
    <property type="entry name" value="Adenine nucleotide alpha hydrolases-like"/>
    <property type="match status" value="1"/>
</dbReference>
<keyword id="KW-0067">ATP-binding</keyword>
<keyword id="KW-0436">Ligase</keyword>
<keyword id="KW-0460">Magnesium</keyword>
<keyword id="KW-0479">Metal-binding</keyword>
<keyword id="KW-0520">NAD</keyword>
<keyword id="KW-0547">Nucleotide-binding</keyword>
<accession>B2TDV9</accession>
<feature type="chain" id="PRO_1000099012" description="NH(3)-dependent NAD(+) synthetase">
    <location>
        <begin position="1"/>
        <end position="286"/>
    </location>
</feature>
<feature type="binding site" evidence="1">
    <location>
        <begin position="51"/>
        <end position="58"/>
    </location>
    <ligand>
        <name>ATP</name>
        <dbReference type="ChEBI" id="CHEBI:30616"/>
    </ligand>
</feature>
<feature type="binding site" evidence="1">
    <location>
        <position position="57"/>
    </location>
    <ligand>
        <name>Mg(2+)</name>
        <dbReference type="ChEBI" id="CHEBI:18420"/>
    </ligand>
</feature>
<feature type="binding site" evidence="1">
    <location>
        <position position="148"/>
    </location>
    <ligand>
        <name>deamido-NAD(+)</name>
        <dbReference type="ChEBI" id="CHEBI:58437"/>
    </ligand>
</feature>
<feature type="binding site" evidence="1">
    <location>
        <position position="168"/>
    </location>
    <ligand>
        <name>ATP</name>
        <dbReference type="ChEBI" id="CHEBI:30616"/>
    </ligand>
</feature>
<feature type="binding site" evidence="1">
    <location>
        <position position="173"/>
    </location>
    <ligand>
        <name>Mg(2+)</name>
        <dbReference type="ChEBI" id="CHEBI:18420"/>
    </ligand>
</feature>
<feature type="binding site" evidence="1">
    <location>
        <position position="181"/>
    </location>
    <ligand>
        <name>deamido-NAD(+)</name>
        <dbReference type="ChEBI" id="CHEBI:58437"/>
    </ligand>
</feature>
<feature type="binding site" evidence="1">
    <location>
        <position position="188"/>
    </location>
    <ligand>
        <name>deamido-NAD(+)</name>
        <dbReference type="ChEBI" id="CHEBI:58437"/>
    </ligand>
</feature>
<feature type="binding site" evidence="1">
    <location>
        <position position="197"/>
    </location>
    <ligand>
        <name>ATP</name>
        <dbReference type="ChEBI" id="CHEBI:30616"/>
    </ligand>
</feature>
<feature type="binding site" evidence="1">
    <location>
        <position position="219"/>
    </location>
    <ligand>
        <name>ATP</name>
        <dbReference type="ChEBI" id="CHEBI:30616"/>
    </ligand>
</feature>
<feature type="binding site" evidence="1">
    <location>
        <begin position="268"/>
        <end position="269"/>
    </location>
    <ligand>
        <name>deamido-NAD(+)</name>
        <dbReference type="ChEBI" id="CHEBI:58437"/>
    </ligand>
</feature>
<reference key="1">
    <citation type="journal article" date="2011" name="J. Bacteriol.">
        <title>Complete genome sequence of the plant growth-promoting endophyte Burkholderia phytofirmans strain PsJN.</title>
        <authorList>
            <person name="Weilharter A."/>
            <person name="Mitter B."/>
            <person name="Shin M.V."/>
            <person name="Chain P.S."/>
            <person name="Nowak J."/>
            <person name="Sessitsch A."/>
        </authorList>
    </citation>
    <scope>NUCLEOTIDE SEQUENCE [LARGE SCALE GENOMIC DNA]</scope>
    <source>
        <strain>DSM 17436 / LMG 22146 / PsJN</strain>
    </source>
</reference>
<sequence length="286" mass="31638">MTQHDPVARQASISEEMHISAEFDAEYEIERRVAFLANYLRSSGLKTYVLGISGGVDSTTAGRLAQLAVERLRAEHYDAHFVAIRLPYGEQKDEADAQQALRFIRADENLTIDIKPAADAMLAALDQSGLLYKDESQQDFVHGNIKARQRMIAQYAVASARAGVVIGTDHAAESVMGFFTKFGDGGADVLPLTGLNKRRVRAVSKALGAPEALAHKVPTADLEMLRPQRPDEDAYGIPYDAIDDFLERKPVSDAARETILRFHEVTRHKRALPYTPFDWPVQTSGD</sequence>